<organism>
    <name type="scientific">Paracoccus denitrificans</name>
    <dbReference type="NCBI Taxonomy" id="266"/>
    <lineage>
        <taxon>Bacteria</taxon>
        <taxon>Pseudomonadati</taxon>
        <taxon>Pseudomonadota</taxon>
        <taxon>Alphaproteobacteria</taxon>
        <taxon>Rhodobacterales</taxon>
        <taxon>Paracoccaceae</taxon>
        <taxon>Paracoccus</taxon>
    </lineage>
</organism>
<protein>
    <recommendedName>
        <fullName>Amicyanin</fullName>
    </recommendedName>
</protein>
<accession>P22364</accession>
<feature type="signal peptide" evidence="1">
    <location>
        <begin position="1"/>
        <end position="26"/>
    </location>
</feature>
<feature type="chain" id="PRO_0000002844" description="Amicyanin">
    <location>
        <begin position="27"/>
        <end position="131"/>
    </location>
</feature>
<feature type="domain" description="Plastocyanin-like">
    <location>
        <begin position="27"/>
        <end position="131"/>
    </location>
</feature>
<feature type="binding site">
    <location>
        <position position="79"/>
    </location>
    <ligand>
        <name>Cu cation</name>
        <dbReference type="ChEBI" id="CHEBI:23378"/>
    </ligand>
</feature>
<feature type="binding site">
    <location>
        <position position="118"/>
    </location>
    <ligand>
        <name>Cu cation</name>
        <dbReference type="ChEBI" id="CHEBI:23378"/>
    </ligand>
</feature>
<feature type="binding site">
    <location>
        <position position="121"/>
    </location>
    <ligand>
        <name>Cu cation</name>
        <dbReference type="ChEBI" id="CHEBI:23378"/>
    </ligand>
</feature>
<feature type="binding site">
    <location>
        <position position="124"/>
    </location>
    <ligand>
        <name>Cu cation</name>
        <dbReference type="ChEBI" id="CHEBI:23378"/>
    </ligand>
</feature>
<feature type="helix" evidence="2">
    <location>
        <begin position="39"/>
        <end position="41"/>
    </location>
</feature>
<feature type="strand" evidence="2">
    <location>
        <begin position="47"/>
        <end position="52"/>
    </location>
</feature>
<feature type="strand" evidence="2">
    <location>
        <begin position="55"/>
        <end position="63"/>
    </location>
</feature>
<feature type="strand" evidence="2">
    <location>
        <begin position="68"/>
        <end position="73"/>
    </location>
</feature>
<feature type="strand" evidence="2">
    <location>
        <begin position="75"/>
        <end position="77"/>
    </location>
</feature>
<feature type="turn" evidence="2">
    <location>
        <begin position="85"/>
        <end position="87"/>
    </location>
</feature>
<feature type="strand" evidence="2">
    <location>
        <begin position="88"/>
        <end position="91"/>
    </location>
</feature>
<feature type="strand" evidence="2">
    <location>
        <begin position="102"/>
        <end position="108"/>
    </location>
</feature>
<feature type="strand" evidence="2">
    <location>
        <begin position="112"/>
        <end position="117"/>
    </location>
</feature>
<feature type="strand" evidence="2">
    <location>
        <begin position="125"/>
        <end position="130"/>
    </location>
</feature>
<proteinExistence type="evidence at protein level"/>
<evidence type="ECO:0000269" key="1">
    <source>
    </source>
</evidence>
<evidence type="ECO:0007829" key="2">
    <source>
        <dbReference type="PDB" id="2OV0"/>
    </source>
</evidence>
<gene>
    <name type="primary">mauC</name>
    <name type="synonym">ami</name>
</gene>
<comment type="function">
    <text>Primary acceptor of electrons from methylamine dehydrogenase. Passes those electrons on either a soluble cytochrome c or to pseudoazurin.</text>
</comment>
<comment type="cofactor">
    <cofactor>
        <name>Cu cation</name>
        <dbReference type="ChEBI" id="CHEBI:23378"/>
    </cofactor>
    <text>Binds 1 copper ion per subunit.</text>
</comment>
<comment type="pathway">
    <text>One-carbon metabolism; methylamine degradation.</text>
</comment>
<comment type="subcellular location">
    <subcellularLocation>
        <location>Periplasm</location>
    </subcellularLocation>
</comment>
<dbReference type="EMBL" id="X55665">
    <property type="protein sequence ID" value="CAA39199.1"/>
    <property type="molecule type" value="Genomic_DNA"/>
</dbReference>
<dbReference type="PIR" id="A24407">
    <property type="entry name" value="A24407"/>
</dbReference>
<dbReference type="PIR" id="S12972">
    <property type="entry name" value="S12972"/>
</dbReference>
<dbReference type="PDB" id="1AAC">
    <property type="method" value="X-ray"/>
    <property type="resolution" value="1.31 A"/>
    <property type="chains" value="A=27-131"/>
</dbReference>
<dbReference type="PDB" id="1AAJ">
    <property type="method" value="X-ray"/>
    <property type="resolution" value="1.80 A"/>
    <property type="chains" value="A=27-131"/>
</dbReference>
<dbReference type="PDB" id="1AAN">
    <property type="method" value="X-ray"/>
    <property type="resolution" value="2.00 A"/>
    <property type="chains" value="A=27-131"/>
</dbReference>
<dbReference type="PDB" id="1BXA">
    <property type="method" value="X-ray"/>
    <property type="resolution" value="1.30 A"/>
    <property type="chains" value="A=27-131"/>
</dbReference>
<dbReference type="PDB" id="1MDA">
    <property type="method" value="X-ray"/>
    <property type="resolution" value="2.50 A"/>
    <property type="chains" value="A/B=29-131"/>
</dbReference>
<dbReference type="PDB" id="1MG2">
    <property type="method" value="X-ray"/>
    <property type="resolution" value="2.25 A"/>
    <property type="chains" value="C/G/K/O=27-131"/>
</dbReference>
<dbReference type="PDB" id="1MG3">
    <property type="method" value="X-ray"/>
    <property type="resolution" value="2.40 A"/>
    <property type="chains" value="C/G/K/O=27-131"/>
</dbReference>
<dbReference type="PDB" id="1SF3">
    <property type="method" value="X-ray"/>
    <property type="resolution" value="1.05 A"/>
    <property type="chains" value="A=27-131"/>
</dbReference>
<dbReference type="PDB" id="1SF5">
    <property type="method" value="X-ray"/>
    <property type="resolution" value="1.10 A"/>
    <property type="chains" value="A=27-131"/>
</dbReference>
<dbReference type="PDB" id="1SFD">
    <property type="method" value="X-ray"/>
    <property type="resolution" value="0.99 A"/>
    <property type="chains" value="A/B=27-131"/>
</dbReference>
<dbReference type="PDB" id="1SFH">
    <property type="method" value="X-ray"/>
    <property type="resolution" value="1.05 A"/>
    <property type="chains" value="A/B=27-131"/>
</dbReference>
<dbReference type="PDB" id="1T5K">
    <property type="method" value="X-ray"/>
    <property type="resolution" value="1.40 A"/>
    <property type="chains" value="A/B/C/D=27-131"/>
</dbReference>
<dbReference type="PDB" id="2GB2">
    <property type="method" value="X-ray"/>
    <property type="resolution" value="1.25 A"/>
    <property type="chains" value="A=27-131"/>
</dbReference>
<dbReference type="PDB" id="2GBA">
    <property type="method" value="X-ray"/>
    <property type="resolution" value="0.92 A"/>
    <property type="chains" value="A=27-131"/>
</dbReference>
<dbReference type="PDB" id="2GC4">
    <property type="method" value="X-ray"/>
    <property type="resolution" value="1.90 A"/>
    <property type="chains" value="C/G/K/O=27-131"/>
</dbReference>
<dbReference type="PDB" id="2GC7">
    <property type="method" value="X-ray"/>
    <property type="resolution" value="1.90 A"/>
    <property type="chains" value="C/G/K/O=27-131"/>
</dbReference>
<dbReference type="PDB" id="2IDQ">
    <property type="method" value="X-ray"/>
    <property type="resolution" value="0.90 A"/>
    <property type="chains" value="A=27-131"/>
</dbReference>
<dbReference type="PDB" id="2IDS">
    <property type="method" value="X-ray"/>
    <property type="resolution" value="1.00 A"/>
    <property type="chains" value="A=27-131"/>
</dbReference>
<dbReference type="PDB" id="2IDT">
    <property type="method" value="X-ray"/>
    <property type="resolution" value="1.00 A"/>
    <property type="chains" value="A=27-131"/>
</dbReference>
<dbReference type="PDB" id="2IDU">
    <property type="method" value="X-ray"/>
    <property type="resolution" value="0.95 A"/>
    <property type="chains" value="A=27-131"/>
</dbReference>
<dbReference type="PDB" id="2J55">
    <property type="method" value="X-ray"/>
    <property type="resolution" value="2.15 A"/>
    <property type="chains" value="A/B=27-131"/>
</dbReference>
<dbReference type="PDB" id="2J56">
    <property type="method" value="X-ray"/>
    <property type="resolution" value="2.10 A"/>
    <property type="chains" value="A/B=27-131"/>
</dbReference>
<dbReference type="PDB" id="2J57">
    <property type="method" value="X-ray"/>
    <property type="resolution" value="2.25 A"/>
    <property type="chains" value="A/B/C/D=27-131"/>
</dbReference>
<dbReference type="PDB" id="2MTA">
    <property type="method" value="X-ray"/>
    <property type="resolution" value="2.40 A"/>
    <property type="chains" value="A=27-131"/>
</dbReference>
<dbReference type="PDB" id="2OV0">
    <property type="method" value="X-ray"/>
    <property type="resolution" value="0.75 A"/>
    <property type="chains" value="A=27-131"/>
</dbReference>
<dbReference type="PDB" id="2QDV">
    <property type="method" value="X-ray"/>
    <property type="resolution" value="0.89 A"/>
    <property type="chains" value="A=27-131"/>
</dbReference>
<dbReference type="PDB" id="2QDW">
    <property type="method" value="X-ray"/>
    <property type="resolution" value="0.92 A"/>
    <property type="chains" value="A=27-131"/>
</dbReference>
<dbReference type="PDB" id="2RAC">
    <property type="method" value="X-ray"/>
    <property type="resolution" value="1.30 A"/>
    <property type="chains" value="A=27-131"/>
</dbReference>
<dbReference type="PDB" id="3IE9">
    <property type="method" value="X-ray"/>
    <property type="resolution" value="2.10 A"/>
    <property type="chains" value="A=27-131"/>
</dbReference>
<dbReference type="PDB" id="3IEA">
    <property type="method" value="X-ray"/>
    <property type="resolution" value="2.20 A"/>
    <property type="chains" value="A=27-131"/>
</dbReference>
<dbReference type="PDB" id="3L45">
    <property type="method" value="Other"/>
    <property type="resolution" value="1.80 A"/>
    <property type="chains" value="A=27-131"/>
</dbReference>
<dbReference type="PDB" id="3PLY">
    <property type="method" value="X-ray"/>
    <property type="resolution" value="2.20 A"/>
    <property type="chains" value="A/B/C/D=27-131"/>
</dbReference>
<dbReference type="PDB" id="3RYM">
    <property type="method" value="X-ray"/>
    <property type="resolution" value="1.70 A"/>
    <property type="chains" value="A/B/C/D=27-131"/>
</dbReference>
<dbReference type="PDB" id="4P5R">
    <property type="method" value="X-ray"/>
    <property type="resolution" value="1.09 A"/>
    <property type="chains" value="A=27-131"/>
</dbReference>
<dbReference type="PDB" id="4P5S">
    <property type="method" value="X-ray"/>
    <property type="resolution" value="1.02 A"/>
    <property type="chains" value="A=27-131"/>
</dbReference>
<dbReference type="PDBsum" id="1AAC"/>
<dbReference type="PDBsum" id="1AAJ"/>
<dbReference type="PDBsum" id="1AAN"/>
<dbReference type="PDBsum" id="1BXA"/>
<dbReference type="PDBsum" id="1MDA"/>
<dbReference type="PDBsum" id="1MG2"/>
<dbReference type="PDBsum" id="1MG3"/>
<dbReference type="PDBsum" id="1SF3"/>
<dbReference type="PDBsum" id="1SF5"/>
<dbReference type="PDBsum" id="1SFD"/>
<dbReference type="PDBsum" id="1SFH"/>
<dbReference type="PDBsum" id="1T5K"/>
<dbReference type="PDBsum" id="2GB2"/>
<dbReference type="PDBsum" id="2GBA"/>
<dbReference type="PDBsum" id="2GC4"/>
<dbReference type="PDBsum" id="2GC7"/>
<dbReference type="PDBsum" id="2IDQ"/>
<dbReference type="PDBsum" id="2IDS"/>
<dbReference type="PDBsum" id="2IDT"/>
<dbReference type="PDBsum" id="2IDU"/>
<dbReference type="PDBsum" id="2J55"/>
<dbReference type="PDBsum" id="2J56"/>
<dbReference type="PDBsum" id="2J57"/>
<dbReference type="PDBsum" id="2MTA"/>
<dbReference type="PDBsum" id="2OV0"/>
<dbReference type="PDBsum" id="2QDV"/>
<dbReference type="PDBsum" id="2QDW"/>
<dbReference type="PDBsum" id="2RAC"/>
<dbReference type="PDBsum" id="3IE9"/>
<dbReference type="PDBsum" id="3IEA"/>
<dbReference type="PDBsum" id="3L45"/>
<dbReference type="PDBsum" id="3PLY"/>
<dbReference type="PDBsum" id="3RYM"/>
<dbReference type="PDBsum" id="4P5R"/>
<dbReference type="PDBsum" id="4P5S"/>
<dbReference type="BMRB" id="P22364"/>
<dbReference type="SMR" id="P22364"/>
<dbReference type="IntAct" id="P22364">
    <property type="interactions" value="3"/>
</dbReference>
<dbReference type="DrugBank" id="DB02467">
    <property type="generic name" value="L-methionine (S)-S-oxide"/>
</dbReference>
<dbReference type="DrugBank" id="DB08646">
    <property type="generic name" value="TRW3-(2-AMINO-3-HYDROXY-PROPYL)-6-(N'-CYCLOHEXYL-HYDRAZINO)OCTAHYDRO-INDOL-7-OL"/>
</dbReference>
<dbReference type="OMA" id="VKNMAYT"/>
<dbReference type="UniPathway" id="UPA00895"/>
<dbReference type="EvolutionaryTrace" id="P22364"/>
<dbReference type="GO" id="GO:0042597">
    <property type="term" value="C:periplasmic space"/>
    <property type="evidence" value="ECO:0007669"/>
    <property type="project" value="UniProtKB-SubCell"/>
</dbReference>
<dbReference type="GO" id="GO:0005507">
    <property type="term" value="F:copper ion binding"/>
    <property type="evidence" value="ECO:0007669"/>
    <property type="project" value="InterPro"/>
</dbReference>
<dbReference type="GO" id="GO:0009055">
    <property type="term" value="F:electron transfer activity"/>
    <property type="evidence" value="ECO:0007669"/>
    <property type="project" value="InterPro"/>
</dbReference>
<dbReference type="CDD" id="cd13921">
    <property type="entry name" value="Amicyanin"/>
    <property type="match status" value="1"/>
</dbReference>
<dbReference type="Gene3D" id="2.60.40.420">
    <property type="entry name" value="Cupredoxins - blue copper proteins"/>
    <property type="match status" value="1"/>
</dbReference>
<dbReference type="InterPro" id="IPR035668">
    <property type="entry name" value="Amicyanin"/>
</dbReference>
<dbReference type="InterPro" id="IPR002386">
    <property type="entry name" value="Amicyanin/Pseudoazurin"/>
</dbReference>
<dbReference type="InterPro" id="IPR013475">
    <property type="entry name" value="Amicyanin_Para/Methyl"/>
</dbReference>
<dbReference type="InterPro" id="IPR000923">
    <property type="entry name" value="BlueCu_1"/>
</dbReference>
<dbReference type="InterPro" id="IPR028871">
    <property type="entry name" value="BlueCu_1_BS"/>
</dbReference>
<dbReference type="InterPro" id="IPR001235">
    <property type="entry name" value="Copper_blue_Plastocyanin"/>
</dbReference>
<dbReference type="InterPro" id="IPR008972">
    <property type="entry name" value="Cupredoxin"/>
</dbReference>
<dbReference type="InterPro" id="IPR052721">
    <property type="entry name" value="ET_Amicyanin"/>
</dbReference>
<dbReference type="NCBIfam" id="TIGR02657">
    <property type="entry name" value="amicyanin"/>
    <property type="match status" value="1"/>
</dbReference>
<dbReference type="PANTHER" id="PTHR36507">
    <property type="entry name" value="BLL1555 PROTEIN"/>
    <property type="match status" value="1"/>
</dbReference>
<dbReference type="PANTHER" id="PTHR36507:SF1">
    <property type="entry name" value="BLL1555 PROTEIN"/>
    <property type="match status" value="1"/>
</dbReference>
<dbReference type="Pfam" id="PF00127">
    <property type="entry name" value="Copper-bind"/>
    <property type="match status" value="1"/>
</dbReference>
<dbReference type="PRINTS" id="PR00155">
    <property type="entry name" value="AMICYANIN"/>
</dbReference>
<dbReference type="PRINTS" id="PR00156">
    <property type="entry name" value="COPPERBLUE"/>
</dbReference>
<dbReference type="SUPFAM" id="SSF49503">
    <property type="entry name" value="Cupredoxins"/>
    <property type="match status" value="1"/>
</dbReference>
<dbReference type="PROSITE" id="PS00196">
    <property type="entry name" value="COPPER_BLUE"/>
    <property type="match status" value="1"/>
</dbReference>
<keyword id="KW-0002">3D-structure</keyword>
<keyword id="KW-0186">Copper</keyword>
<keyword id="KW-0903">Direct protein sequencing</keyword>
<keyword id="KW-0249">Electron transport</keyword>
<keyword id="KW-0479">Metal-binding</keyword>
<keyword id="KW-0574">Periplasm</keyword>
<keyword id="KW-0732">Signal</keyword>
<keyword id="KW-0813">Transport</keyword>
<name>AMCY_PARDE</name>
<sequence>MISATKIRSCLAACVLAAFGATGALADKATIPSESPFAAAEVADGAIVVDIAKMKYETPELHVKVGDTVTWINREAMPHNVHFVAGVLGEAALKGPMMKKEQAYSLTFTEAGTYDYHCTPHPFMRGKVVVE</sequence>
<reference key="1">
    <citation type="journal article" date="1990" name="FEBS Lett.">
        <title>Mutagenesis of the gene encoding amicyanin of Paracoccus denitrificans and the resultant effect on methylamine oxidation.</title>
        <authorList>
            <person name="van Spanning R.J.M."/>
            <person name="Wansell C.W."/>
            <person name="Reijnders W.N.M."/>
            <person name="Oltmann L.F."/>
            <person name="Stouthamer A.H."/>
        </authorList>
    </citation>
    <scope>NUCLEOTIDE SEQUENCE [GENOMIC DNA]</scope>
    <source>
        <strain>ATCC 19367 / NBRC 13301 / NCIMB 8944 / NRRL B-3785</strain>
    </source>
</reference>
<reference key="2">
    <citation type="journal article" date="1986" name="Biochemistry">
        <title>Properties of Paracoccus denitrificans amicyanin.</title>
        <authorList>
            <person name="Husain M."/>
            <person name="Davidson V.L."/>
        </authorList>
    </citation>
    <scope>PROTEIN SEQUENCE OF 27-36</scope>
</reference>
<reference key="3">
    <citation type="journal article" date="1992" name="Biochemistry">
        <title>Crystal structure of an electron-transfer complex between methylamine dehydrogenase and amicyanin.</title>
        <authorList>
            <person name="Chen L."/>
            <person name="Durley R."/>
            <person name="Poliks B.J."/>
            <person name="Hamada K."/>
            <person name="Chen Z."/>
            <person name="Mathews F.S."/>
            <person name="Davidson V.L."/>
            <person name="Satow Y."/>
            <person name="Huizinga E.G."/>
            <person name="Vellieux F.M.D."/>
            <person name="Hol W.G.J."/>
        </authorList>
    </citation>
    <scope>X-RAY CRYSTALLOGRAPHY (2.5 ANGSTROMS) OF COMPLEX WITH MADH</scope>
</reference>
<reference key="4">
    <citation type="journal article" date="1994" name="Science">
        <title>Structure of an electron transfer complex: methylamine dehydrogenase, amicyanin, and cytochrome c551i.</title>
        <authorList>
            <person name="Chen L."/>
            <person name="Durley R."/>
            <person name="Mathews F.S."/>
            <person name="Davidson V.L."/>
        </authorList>
    </citation>
    <scope>X-RAY CRYSTALLOGRAPHY (2.4 ANGSTROMS)</scope>
</reference>
<reference key="5">
    <citation type="journal article" date="1996" name="Acta Crystallogr. D">
        <title>X-ray structure of the cupredoxin amicyanin, from Paracoccus denitrificans, refined at 1.31-A resolution.</title>
        <authorList>
            <person name="Cunane L.M."/>
            <person name="Chen Z.-W."/>
            <person name="Durley R.C.E."/>
            <person name="Mathews F.S."/>
        </authorList>
    </citation>
    <scope>X-RAY CRYSTALLOGRAPHY (1.31 ANGSTROMS)</scope>
</reference>
<reference key="6">
    <citation type="journal article" date="1998" name="Biochemistry">
        <title>Molecular basis for interprotein complex-dependent effects on the redox properties of amicyanin.</title>
        <authorList>
            <person name="Zhu Z."/>
            <person name="Cunane L.M."/>
            <person name="Chen Z.-W."/>
            <person name="Durley R.C.E."/>
            <person name="Mathews F.S."/>
            <person name="Davidson V.L."/>
        </authorList>
    </citation>
    <scope>X-RAY CRYSTALLOGRAPHY (1.3 ANGSTROMS)</scope>
    <scope>COPPER-BINDING SITES HIS-79; CYS-118; HIS-121 AND MET-124</scope>
</reference>